<accession>P16352</accession>
<protein>
    <recommendedName>
        <fullName>Lectin</fullName>
    </recommendedName>
</protein>
<reference key="1">
    <citation type="journal article" date="1979" name="Physiol. Veg.">
        <title>Lectin sequences as a tool for chemotaxonomical classification.</title>
        <authorList>
            <person name="Foriers A."/>
            <person name="de Neve R."/>
            <person name="Strosberg A.D."/>
        </authorList>
    </citation>
    <scope>PROTEIN SEQUENCE</scope>
    <source>
        <tissue>Seed</tissue>
    </source>
</reference>
<organism>
    <name type="scientific">Crotalaria juncea</name>
    <name type="common">Sunn hemp</name>
    <dbReference type="NCBI Taxonomy" id="3829"/>
    <lineage>
        <taxon>Eukaryota</taxon>
        <taxon>Viridiplantae</taxon>
        <taxon>Streptophyta</taxon>
        <taxon>Embryophyta</taxon>
        <taxon>Tracheophyta</taxon>
        <taxon>Spermatophyta</taxon>
        <taxon>Magnoliopsida</taxon>
        <taxon>eudicotyledons</taxon>
        <taxon>Gunneridae</taxon>
        <taxon>Pentapetalae</taxon>
        <taxon>rosids</taxon>
        <taxon>fabids</taxon>
        <taxon>Fabales</taxon>
        <taxon>Fabaceae</taxon>
        <taxon>Papilionoideae</taxon>
        <taxon>50 kb inversion clade</taxon>
        <taxon>genistoids sensu lato</taxon>
        <taxon>core genistoids</taxon>
        <taxon>Crotalarieae</taxon>
        <taxon>Crotalaria</taxon>
    </lineage>
</organism>
<feature type="chain" id="PRO_0000105092" description="Lectin">
    <location>
        <begin position="1"/>
        <end position="24" status="greater than"/>
    </location>
</feature>
<feature type="region of interest" description="Disordered" evidence="1">
    <location>
        <begin position="1"/>
        <end position="24"/>
    </location>
</feature>
<feature type="compositionally biased region" description="Polar residues" evidence="1">
    <location>
        <begin position="1"/>
        <end position="18"/>
    </location>
</feature>
<feature type="non-terminal residue">
    <location>
        <position position="24"/>
    </location>
</feature>
<evidence type="ECO:0000256" key="1">
    <source>
        <dbReference type="SAM" id="MobiDB-lite"/>
    </source>
</evidence>
<evidence type="ECO:0000305" key="2"/>
<sequence length="24" mass="2614">AEEQSFSSTKFSTDQPNLILQGDA</sequence>
<dbReference type="PIR" id="S08293">
    <property type="entry name" value="S08293"/>
</dbReference>
<dbReference type="GO" id="GO:0030246">
    <property type="term" value="F:carbohydrate binding"/>
    <property type="evidence" value="ECO:0007669"/>
    <property type="project" value="UniProtKB-KW"/>
</dbReference>
<keyword id="KW-0903">Direct protein sequencing</keyword>
<keyword id="KW-0430">Lectin</keyword>
<proteinExistence type="evidence at protein level"/>
<comment type="subunit">
    <text>Homotetramer.</text>
</comment>
<comment type="similarity">
    <text evidence="2">Belongs to the leguminous lectin family.</text>
</comment>
<name>LEC_CROJU</name>